<comment type="function">
    <text evidence="1">Catalyzes the synthesis of GMP from XMP.</text>
</comment>
<comment type="catalytic activity">
    <reaction evidence="1">
        <text>XMP + L-glutamine + ATP + H2O = GMP + L-glutamate + AMP + diphosphate + 2 H(+)</text>
        <dbReference type="Rhea" id="RHEA:11680"/>
        <dbReference type="ChEBI" id="CHEBI:15377"/>
        <dbReference type="ChEBI" id="CHEBI:15378"/>
        <dbReference type="ChEBI" id="CHEBI:29985"/>
        <dbReference type="ChEBI" id="CHEBI:30616"/>
        <dbReference type="ChEBI" id="CHEBI:33019"/>
        <dbReference type="ChEBI" id="CHEBI:57464"/>
        <dbReference type="ChEBI" id="CHEBI:58115"/>
        <dbReference type="ChEBI" id="CHEBI:58359"/>
        <dbReference type="ChEBI" id="CHEBI:456215"/>
        <dbReference type="EC" id="6.3.5.2"/>
    </reaction>
</comment>
<comment type="pathway">
    <text evidence="1">Purine metabolism; GMP biosynthesis; GMP from XMP (L-Gln route): step 1/1.</text>
</comment>
<comment type="subunit">
    <text evidence="1">Heterodimer composed of a glutamine amidotransferase subunit (A) and a GMP-binding subunit (B).</text>
</comment>
<reference key="1">
    <citation type="journal article" date="2004" name="Genome Res.">
        <title>Genome sequence of Haloarcula marismortui: a halophilic archaeon from the Dead Sea.</title>
        <authorList>
            <person name="Baliga N.S."/>
            <person name="Bonneau R."/>
            <person name="Facciotti M.T."/>
            <person name="Pan M."/>
            <person name="Glusman G."/>
            <person name="Deutsch E.W."/>
            <person name="Shannon P."/>
            <person name="Chiu Y."/>
            <person name="Weng R.S."/>
            <person name="Gan R.R."/>
            <person name="Hung P."/>
            <person name="Date S.V."/>
            <person name="Marcotte E."/>
            <person name="Hood L."/>
            <person name="Ng W.V."/>
        </authorList>
    </citation>
    <scope>NUCLEOTIDE SEQUENCE [LARGE SCALE GENOMIC DNA]</scope>
    <source>
        <strain>ATCC 43049 / DSM 3752 / JCM 8966 / VKM B-1809</strain>
    </source>
</reference>
<dbReference type="EC" id="6.3.5.2" evidence="1"/>
<dbReference type="EMBL" id="AY596297">
    <property type="protein sequence ID" value="AAV46602.1"/>
    <property type="molecule type" value="Genomic_DNA"/>
</dbReference>
<dbReference type="RefSeq" id="WP_004957654.1">
    <property type="nucleotide sequence ID" value="NZ_CP039138.1"/>
</dbReference>
<dbReference type="SMR" id="Q5V1K0"/>
<dbReference type="STRING" id="272569.rrnAC1694"/>
<dbReference type="MEROPS" id="C26.A31"/>
<dbReference type="PaxDb" id="272569-rrnAC1694"/>
<dbReference type="EnsemblBacteria" id="AAV46602">
    <property type="protein sequence ID" value="AAV46602"/>
    <property type="gene ID" value="rrnAC1694"/>
</dbReference>
<dbReference type="KEGG" id="hma:rrnAC1694"/>
<dbReference type="PATRIC" id="fig|272569.17.peg.2379"/>
<dbReference type="eggNOG" id="arCOG00087">
    <property type="taxonomic scope" value="Archaea"/>
</dbReference>
<dbReference type="HOGENOM" id="CLU_014340_1_4_2"/>
<dbReference type="UniPathway" id="UPA00189">
    <property type="reaction ID" value="UER00296"/>
</dbReference>
<dbReference type="Proteomes" id="UP000001169">
    <property type="component" value="Chromosome I"/>
</dbReference>
<dbReference type="GO" id="GO:0005829">
    <property type="term" value="C:cytosol"/>
    <property type="evidence" value="ECO:0007669"/>
    <property type="project" value="TreeGrafter"/>
</dbReference>
<dbReference type="GO" id="GO:0005524">
    <property type="term" value="F:ATP binding"/>
    <property type="evidence" value="ECO:0007669"/>
    <property type="project" value="UniProtKB-KW"/>
</dbReference>
<dbReference type="GO" id="GO:0003921">
    <property type="term" value="F:GMP synthase activity"/>
    <property type="evidence" value="ECO:0007669"/>
    <property type="project" value="TreeGrafter"/>
</dbReference>
<dbReference type="FunFam" id="3.40.50.880:FF:000047">
    <property type="entry name" value="GMP synthase [glutamine-hydrolyzing] subunit A"/>
    <property type="match status" value="1"/>
</dbReference>
<dbReference type="Gene3D" id="3.40.50.880">
    <property type="match status" value="1"/>
</dbReference>
<dbReference type="HAMAP" id="MF_01510">
    <property type="entry name" value="GMP_synthase_A"/>
    <property type="match status" value="1"/>
</dbReference>
<dbReference type="InterPro" id="IPR029062">
    <property type="entry name" value="Class_I_gatase-like"/>
</dbReference>
<dbReference type="InterPro" id="IPR017926">
    <property type="entry name" value="GATASE"/>
</dbReference>
<dbReference type="InterPro" id="IPR004739">
    <property type="entry name" value="GMP_synth_GATase"/>
</dbReference>
<dbReference type="InterPro" id="IPR023686">
    <property type="entry name" value="GMP_synthase_A"/>
</dbReference>
<dbReference type="NCBIfam" id="TIGR00888">
    <property type="entry name" value="guaA_Nterm"/>
    <property type="match status" value="1"/>
</dbReference>
<dbReference type="NCBIfam" id="NF001975">
    <property type="entry name" value="PRK00758.1"/>
    <property type="match status" value="1"/>
</dbReference>
<dbReference type="PANTHER" id="PTHR11922:SF2">
    <property type="entry name" value="GMP SYNTHASE [GLUTAMINE-HYDROLYZING]"/>
    <property type="match status" value="1"/>
</dbReference>
<dbReference type="PANTHER" id="PTHR11922">
    <property type="entry name" value="GMP SYNTHASE-RELATED"/>
    <property type="match status" value="1"/>
</dbReference>
<dbReference type="Pfam" id="PF00117">
    <property type="entry name" value="GATase"/>
    <property type="match status" value="1"/>
</dbReference>
<dbReference type="PRINTS" id="PR00097">
    <property type="entry name" value="ANTSNTHASEII"/>
</dbReference>
<dbReference type="PRINTS" id="PR00096">
    <property type="entry name" value="GATASE"/>
</dbReference>
<dbReference type="SUPFAM" id="SSF52317">
    <property type="entry name" value="Class I glutamine amidotransferase-like"/>
    <property type="match status" value="1"/>
</dbReference>
<dbReference type="PROSITE" id="PS51273">
    <property type="entry name" value="GATASE_TYPE_1"/>
    <property type="match status" value="1"/>
</dbReference>
<sequence length="189" mass="20567">MTRIDVIDNHGQFTHLEQRALRDMGVDVSLRDNTTPPEEIDADGIVLSGGPDMDDIGNCPEYLDLDVPVLGICLGMQLIADELGGRVGGGEYGGYADVTVDILDDDDPLLGSLYPETRVWASHADEVKEVPPGFERTATSDVCGVEAMSNTDEAIYGVQWHPEVAHTEEGEEVFENFLSVCDQQSVARQ</sequence>
<proteinExistence type="inferred from homology"/>
<name>GUAAA_HALMA</name>
<organism>
    <name type="scientific">Haloarcula marismortui (strain ATCC 43049 / DSM 3752 / JCM 8966 / VKM B-1809)</name>
    <name type="common">Halobacterium marismortui</name>
    <dbReference type="NCBI Taxonomy" id="272569"/>
    <lineage>
        <taxon>Archaea</taxon>
        <taxon>Methanobacteriati</taxon>
        <taxon>Methanobacteriota</taxon>
        <taxon>Stenosarchaea group</taxon>
        <taxon>Halobacteria</taxon>
        <taxon>Halobacteriales</taxon>
        <taxon>Haloarculaceae</taxon>
        <taxon>Haloarcula</taxon>
    </lineage>
</organism>
<keyword id="KW-0067">ATP-binding</keyword>
<keyword id="KW-0315">Glutamine amidotransferase</keyword>
<keyword id="KW-0332">GMP biosynthesis</keyword>
<keyword id="KW-0436">Ligase</keyword>
<keyword id="KW-0547">Nucleotide-binding</keyword>
<keyword id="KW-0658">Purine biosynthesis</keyword>
<keyword id="KW-1185">Reference proteome</keyword>
<gene>
    <name evidence="1" type="primary">guaAA</name>
    <name type="synonym">guaA2</name>
    <name type="ordered locus">rrnAC1694</name>
</gene>
<accession>Q5V1K0</accession>
<feature type="chain" id="PRO_0000140218" description="GMP synthase [glutamine-hydrolyzing] subunit A">
    <location>
        <begin position="1"/>
        <end position="189"/>
    </location>
</feature>
<feature type="domain" description="Glutamine amidotransferase type-1" evidence="1">
    <location>
        <begin position="3"/>
        <end position="187"/>
    </location>
</feature>
<feature type="active site" description="Nucleophile" evidence="1">
    <location>
        <position position="73"/>
    </location>
</feature>
<feature type="active site" evidence="1">
    <location>
        <position position="161"/>
    </location>
</feature>
<feature type="active site" evidence="1">
    <location>
        <position position="163"/>
    </location>
</feature>
<evidence type="ECO:0000255" key="1">
    <source>
        <dbReference type="HAMAP-Rule" id="MF_01510"/>
    </source>
</evidence>
<protein>
    <recommendedName>
        <fullName evidence="1">GMP synthase [glutamine-hydrolyzing] subunit A</fullName>
        <ecNumber evidence="1">6.3.5.2</ecNumber>
    </recommendedName>
    <alternativeName>
        <fullName evidence="1">Glutamine amidotransferase</fullName>
    </alternativeName>
</protein>